<protein>
    <recommendedName>
        <fullName evidence="10">3-hydroxy-3-methylglutaryl-coenzyme A reductase</fullName>
        <shortName evidence="10">HMG-CoA reductase</shortName>
        <ecNumber evidence="12">1.1.1.34</ecNumber>
    </recommendedName>
</protein>
<accession>B2KX91</accession>
<organism>
    <name type="scientific">Ganoderma lucidum</name>
    <name type="common">Ling zhi medicinal fungus</name>
    <name type="synonym">Bracket fungus</name>
    <dbReference type="NCBI Taxonomy" id="5315"/>
    <lineage>
        <taxon>Eukaryota</taxon>
        <taxon>Fungi</taxon>
        <taxon>Dikarya</taxon>
        <taxon>Basidiomycota</taxon>
        <taxon>Agaricomycotina</taxon>
        <taxon>Agaricomycetes</taxon>
        <taxon>Polyporales</taxon>
        <taxon>Polyporaceae</taxon>
        <taxon>Ganoderma</taxon>
    </lineage>
</organism>
<sequence length="1226" mass="131175">MRAVLRLLSTHTVFSPIETIVSVFVLATLAYFHILSGIKHSSFFASSHPPAIRPAFAHLTNGEWVAVSQHDWTEAWKHPGGSLDALELQQVVFTLDDKTQPSAVLDASAISQHLVSNVPALSGKAYSSLCHHPNVSGTSCFTSVSGPGASPILTLSFKPGTRDDWLGSLRKEKTITLDGVKYDVGAGKRQESIGDMESSKWVAYALSALVLRFWELTKADSLDILVVLTGYILMHVTFMRLFLASRALGSNFWLSAGIFSSATISFLFTLPMCRSMDIPLDPIALTEALPFLVCTVGFDKPLRLARAVMAHPNILKPQDDGRMKAAGDVILEALDRVGNMILRDYALEIAVLFVGVNSRVGGLKEFCAVAAALLAMDRLMTFTLYTAVLTIMVEVRRIKKVRDMTKARSRSSSITAVTANGTAIRGVLSRKSSKQSVTEPETTKNLRQRATDSAIGVKGSLLKDGGRLQEAEENPMARLKLLLIASFLTLHILNFCTTLTSATANARHQRHPFRTVQEVVPIPRVDITTPAIANILSHLAVAQEPMFTVVGSEPIELLVKVAAPVYVHALPLAPALRASNTNTGEAIENFMSSWSSLVGDPVVSKWIVALLAVSVALNGYLLKGIAAGSGLAAMRAVRSQGVRFRSRARSIVKISDEPEPEPEHSIDPAPVVFFASAAPAVEAPAPAPAPEPEPPVNRPPPLTIFSRPLNLETVDKKLQDALPIRSPPPVEPITPESREVEPTQVEVRSLAECVDVFENGPRPVSVALKTLNDEEVILLCQTGKIAPYALVKMLADFDRAVRVRRALISRASRTKTLENSLVPMKDYDYARVMGACCENVIGYMPLPLGIAGPLKIDGLMYPIPMATAEGTLVASTSRGCKALNAGGGVTTVLTADGMTRGPAIDFPSIVRAAEAKAFIESEDGYATIREAFESTSRFAKLQKIKCALAGRTLFVRFATRTGDAMGMNMISKATEKALDVLSHEFPEMVVLALSGNYCTDKKPAAISWIEGRGKSIVAEAVIPGKVVKSVLKTTVESLCNVNTKKNLIGSAMAGSVGGFNAHAANILTAVFLATGQDPAQNVESSNCMTLMEPTNGGEDLLMTISMPCIEVGTVGGGTILEPQGAVLDLLGVRGAHPTNPGQNAQQLARIIASAVMAGELSLISALAAGHLVRAHLAHNRSQLNTPMPSRPHTPGPEDVSHVQQLPTPSASDDKGVTAQGYVVEAK</sequence>
<keyword id="KW-0256">Endoplasmic reticulum</keyword>
<keyword id="KW-0444">Lipid biosynthesis</keyword>
<keyword id="KW-0443">Lipid metabolism</keyword>
<keyword id="KW-0472">Membrane</keyword>
<keyword id="KW-0521">NADP</keyword>
<keyword id="KW-0560">Oxidoreductase</keyword>
<keyword id="KW-0752">Steroid biosynthesis</keyword>
<keyword id="KW-0753">Steroid metabolism</keyword>
<keyword id="KW-0756">Sterol biosynthesis</keyword>
<keyword id="KW-1207">Sterol metabolism</keyword>
<keyword id="KW-0812">Transmembrane</keyword>
<keyword id="KW-1133">Transmembrane helix</keyword>
<reference key="1">
    <citation type="journal article" date="2008" name="Biosci. Biotechnol. Biochem.">
        <title>Cloning and characterization of a gene encoding HMG-CoA reductase from Ganoderma lucidum and its functional identification in yeast.</title>
        <authorList>
            <person name="Shang C.H."/>
            <person name="Zhu F."/>
            <person name="Li N."/>
            <person name="Ou-Yang X."/>
            <person name="Shi L."/>
            <person name="Zhao M.W."/>
            <person name="Li Y.X."/>
        </authorList>
    </citation>
    <scope>NUCLEOTIDE SEQUENCE [GENOMIC DNA / MRNA]</scope>
    <scope>FUNCTION</scope>
    <scope>DEVELOPMENTAL STAGE</scope>
</reference>
<reference key="2">
    <citation type="journal article" date="2013" name="World J. Microbiol. Biotechnol.">
        <title>Molecular characterization and expression analysis of GlHMGS, a gene encoding hydroxymethylglutaryl-CoA synthase from Ganoderma lucidum (Ling-zhi) in ganoderic acid biosynthesis pathway.</title>
        <authorList>
            <person name="Ren A."/>
            <person name="Ouyang X."/>
            <person name="Shi L."/>
            <person name="Jiang A.L."/>
            <person name="Mu D.S."/>
            <person name="Li M.J."/>
            <person name="Han Q."/>
            <person name="Zhao M.W."/>
        </authorList>
    </citation>
    <scope>FUNCTION</scope>
</reference>
<reference key="3">
    <citation type="journal article" date="2018" name="Biotechnol. Bioeng.">
        <title>Biosynthesis of a ganoderic acid in Saccharomyces cerevisiae by expressing a cytochrome P450 gene from Ganoderma lucidum.</title>
        <authorList>
            <person name="Wang W.F."/>
            <person name="Xiao H."/>
            <person name="Zhong J.J."/>
        </authorList>
    </citation>
    <scope>FUNCTION</scope>
</reference>
<reference key="4">
    <citation type="journal article" date="2019" name="Microb. Biotechnol.">
        <title>Enhanced production of individual ganoderic acids by integrating Vitreoscilla haemoglobin expression and calcium ion induction in liquid static cultures of Ganoderma lingzhi.</title>
        <authorList>
            <person name="Xu J.W."/>
            <person name="Yue T.H."/>
            <person name="Yu X."/>
            <person name="Zhao P."/>
            <person name="Li T."/>
            <person name="Li N."/>
        </authorList>
    </citation>
    <scope>INDUCTION</scope>
</reference>
<name>HMDH_GANLU</name>
<evidence type="ECO:0000250" key="1">
    <source>
        <dbReference type="UniProtKB" id="P04035"/>
    </source>
</evidence>
<evidence type="ECO:0000250" key="2">
    <source>
        <dbReference type="UniProtKB" id="P12683"/>
    </source>
</evidence>
<evidence type="ECO:0000255" key="3"/>
<evidence type="ECO:0000255" key="4">
    <source>
        <dbReference type="PROSITE-ProRule" id="PRU00199"/>
    </source>
</evidence>
<evidence type="ECO:0000255" key="5">
    <source>
        <dbReference type="PROSITE-ProRule" id="PRU10003"/>
    </source>
</evidence>
<evidence type="ECO:0000256" key="6">
    <source>
        <dbReference type="SAM" id="MobiDB-lite"/>
    </source>
</evidence>
<evidence type="ECO:0000269" key="7">
    <source>
    </source>
</evidence>
<evidence type="ECO:0000269" key="8">
    <source>
    </source>
</evidence>
<evidence type="ECO:0000269" key="9">
    <source>
    </source>
</evidence>
<evidence type="ECO:0000303" key="10">
    <source>
    </source>
</evidence>
<evidence type="ECO:0000305" key="11"/>
<evidence type="ECO:0000305" key="12">
    <source>
    </source>
</evidence>
<evidence type="ECO:0000305" key="13">
    <source>
    </source>
</evidence>
<comment type="function">
    <text evidence="2 7 8 13">HMG-CoA reductase; part of the first module of ergosterol biosynthesis pathway that includes the early steps of the pathway, conserved across all eukaryotes, and which results in the formation of mevalonate from acetyl-coenzyme A (acetyl-CoA) (PubMed:18460810). This module also plays a key role in the biosynthesis of triterpenes such as ganoderic acids (GA), a group of highly oxygenated lanostane-type triterpenoids which are well recognized as a main group of unique bioactive compounds in the medicinal mushroom Ganoderma lucidum (Probable) (PubMed:23138457). In this module, the acetyl-CoA acetyltransferase catalyzes the formation of acetoacetyl-CoA (By similarity). The hydroxymethylglutaryl-CoA synthase HMGS then condenses acetyl-CoA with acetoacetyl-CoA to form HMG-CoA (PubMed:23138457). The rate-limiting step of the early module is the reduction to mevalonate by the 3-hydroxy-3-methylglutaryl-coenzyme A (HMG-CoA) reductase (PubMed:18460810).</text>
</comment>
<comment type="catalytic activity">
    <reaction evidence="12">
        <text>(R)-mevalonate + 2 NADP(+) + CoA = (3S)-3-hydroxy-3-methylglutaryl-CoA + 2 NADPH + 2 H(+)</text>
        <dbReference type="Rhea" id="RHEA:15989"/>
        <dbReference type="ChEBI" id="CHEBI:15378"/>
        <dbReference type="ChEBI" id="CHEBI:36464"/>
        <dbReference type="ChEBI" id="CHEBI:43074"/>
        <dbReference type="ChEBI" id="CHEBI:57287"/>
        <dbReference type="ChEBI" id="CHEBI:57783"/>
        <dbReference type="ChEBI" id="CHEBI:58349"/>
        <dbReference type="EC" id="1.1.1.34"/>
    </reaction>
</comment>
<comment type="pathway">
    <text>Metabolic intermediate biosynthesis; (R)-mevalonate biosynthesis; (R)-mevalonate from acetyl-CoA: step 3/3.</text>
</comment>
<comment type="subcellular location">
    <subcellularLocation>
        <location evidence="2">Endoplasmic reticulum membrane</location>
        <topology evidence="3">Multi-pass membrane protein</topology>
    </subcellularLocation>
</comment>
<comment type="developmental stage">
    <text evidence="7">Expression is relatively low in mycelia and reaches the highest level in the primordia.</text>
</comment>
<comment type="induction">
    <text evidence="9">Expression is induced in ganoderic acid (GA) producing conditions.</text>
</comment>
<comment type="similarity">
    <text evidence="11">Belongs to the HMG-CoA reductase family.</text>
</comment>
<proteinExistence type="evidence at transcript level"/>
<feature type="chain" id="PRO_0000454391" description="3-hydroxy-3-methylglutaryl-coenzyme A reductase">
    <location>
        <begin position="1"/>
        <end position="1226"/>
    </location>
</feature>
<feature type="transmembrane region" description="Helical" evidence="3">
    <location>
        <begin position="17"/>
        <end position="37"/>
    </location>
</feature>
<feature type="transmembrane region" description="Helical" evidence="3">
    <location>
        <begin position="224"/>
        <end position="244"/>
    </location>
</feature>
<feature type="transmembrane region" description="Helical" evidence="3">
    <location>
        <begin position="252"/>
        <end position="272"/>
    </location>
</feature>
<feature type="transmembrane region" description="Helical" evidence="3">
    <location>
        <begin position="337"/>
        <end position="357"/>
    </location>
</feature>
<feature type="transmembrane region" description="Helical" evidence="3">
    <location>
        <begin position="373"/>
        <end position="393"/>
    </location>
</feature>
<feature type="transmembrane region" description="Helical" evidence="3">
    <location>
        <begin position="481"/>
        <end position="501"/>
    </location>
</feature>
<feature type="transmembrane region" description="Helical" evidence="3">
    <location>
        <begin position="1150"/>
        <end position="1170"/>
    </location>
</feature>
<feature type="domain" description="SSD" evidence="4">
    <location>
        <begin position="223"/>
        <end position="391"/>
    </location>
</feature>
<feature type="region of interest" description="Disordered" evidence="6">
    <location>
        <begin position="428"/>
        <end position="449"/>
    </location>
</feature>
<feature type="region of interest" description="Disordered" evidence="6">
    <location>
        <begin position="683"/>
        <end position="702"/>
    </location>
</feature>
<feature type="region of interest" description="Disordered" evidence="6">
    <location>
        <begin position="722"/>
        <end position="742"/>
    </location>
</feature>
<feature type="region of interest" description="Disordered" evidence="6">
    <location>
        <begin position="1182"/>
        <end position="1226"/>
    </location>
</feature>
<feature type="compositionally biased region" description="Polar residues" evidence="6">
    <location>
        <begin position="434"/>
        <end position="445"/>
    </location>
</feature>
<feature type="compositionally biased region" description="Pro residues" evidence="6">
    <location>
        <begin position="685"/>
        <end position="702"/>
    </location>
</feature>
<feature type="compositionally biased region" description="Polar residues" evidence="6">
    <location>
        <begin position="1201"/>
        <end position="1210"/>
    </location>
</feature>
<feature type="active site" description="Charge relay system" evidence="1">
    <location>
        <position position="869"/>
    </location>
</feature>
<feature type="active site" description="Charge relay system" evidence="1">
    <location>
        <position position="1001"/>
    </location>
</feature>
<feature type="active site" description="Charge relay system" evidence="1">
    <location>
        <position position="1077"/>
    </location>
</feature>
<feature type="active site" description="Proton donor" evidence="5">
    <location>
        <position position="1175"/>
    </location>
</feature>
<feature type="binding site" evidence="1">
    <location>
        <begin position="875"/>
        <end position="881"/>
    </location>
    <ligand>
        <name>CoA</name>
        <dbReference type="ChEBI" id="CHEBI:57287"/>
    </ligand>
</feature>
<feature type="binding site" evidence="1">
    <location>
        <begin position="936"/>
        <end position="938"/>
    </location>
    <ligand>
        <name>NADP(+)</name>
        <dbReference type="ChEBI" id="CHEBI:58349"/>
    </ligand>
</feature>
<feature type="binding site" evidence="1">
    <location>
        <begin position="963"/>
        <end position="971"/>
    </location>
    <ligand>
        <name>NADP(+)</name>
        <dbReference type="ChEBI" id="CHEBI:58349"/>
    </ligand>
</feature>
<feature type="binding site" evidence="1">
    <location>
        <begin position="1030"/>
        <end position="1032"/>
    </location>
    <ligand>
        <name>CoA</name>
        <dbReference type="ChEBI" id="CHEBI:57287"/>
    </ligand>
</feature>
<feature type="binding site" evidence="1">
    <location>
        <begin position="1174"/>
        <end position="1175"/>
    </location>
    <ligand>
        <name>CoA</name>
        <dbReference type="ChEBI" id="CHEBI:57287"/>
    </ligand>
</feature>
<feature type="binding site" evidence="1">
    <location>
        <begin position="1179"/>
        <end position="1180"/>
    </location>
    <ligand>
        <name>NADP(+)</name>
        <dbReference type="ChEBI" id="CHEBI:58349"/>
    </ligand>
</feature>
<dbReference type="EC" id="1.1.1.34" evidence="12"/>
<dbReference type="EMBL" id="EU263989">
    <property type="protein sequence ID" value="ABY84848.1"/>
    <property type="molecule type" value="mRNA"/>
</dbReference>
<dbReference type="EMBL" id="EU263990">
    <property type="protein sequence ID" value="ABY84849.1"/>
    <property type="molecule type" value="Genomic_DNA"/>
</dbReference>
<dbReference type="SMR" id="B2KX91"/>
<dbReference type="BRENDA" id="1.1.1.34">
    <property type="organism ID" value="2399"/>
</dbReference>
<dbReference type="UniPathway" id="UPA00058">
    <property type="reaction ID" value="UER00103"/>
</dbReference>
<dbReference type="GO" id="GO:0005789">
    <property type="term" value="C:endoplasmic reticulum membrane"/>
    <property type="evidence" value="ECO:0007669"/>
    <property type="project" value="UniProtKB-SubCell"/>
</dbReference>
<dbReference type="GO" id="GO:0005778">
    <property type="term" value="C:peroxisomal membrane"/>
    <property type="evidence" value="ECO:0007669"/>
    <property type="project" value="TreeGrafter"/>
</dbReference>
<dbReference type="GO" id="GO:0004420">
    <property type="term" value="F:hydroxymethylglutaryl-CoA reductase (NADPH) activity"/>
    <property type="evidence" value="ECO:0007669"/>
    <property type="project" value="UniProtKB-EC"/>
</dbReference>
<dbReference type="GO" id="GO:0015936">
    <property type="term" value="P:coenzyme A metabolic process"/>
    <property type="evidence" value="ECO:0007669"/>
    <property type="project" value="InterPro"/>
</dbReference>
<dbReference type="GO" id="GO:0006696">
    <property type="term" value="P:ergosterol biosynthetic process"/>
    <property type="evidence" value="ECO:0007669"/>
    <property type="project" value="TreeGrafter"/>
</dbReference>
<dbReference type="GO" id="GO:0008299">
    <property type="term" value="P:isoprenoid biosynthetic process"/>
    <property type="evidence" value="ECO:0007669"/>
    <property type="project" value="InterPro"/>
</dbReference>
<dbReference type="CDD" id="cd00643">
    <property type="entry name" value="HMG-CoA_reductase_classI"/>
    <property type="match status" value="1"/>
</dbReference>
<dbReference type="FunFam" id="1.10.3270.10:FF:000001">
    <property type="entry name" value="3-hydroxy-3-methylglutaryl coenzyme A reductase"/>
    <property type="match status" value="1"/>
</dbReference>
<dbReference type="FunFam" id="3.30.70.420:FF:000001">
    <property type="entry name" value="3-hydroxy-3-methylglutaryl coenzyme A reductase"/>
    <property type="match status" value="1"/>
</dbReference>
<dbReference type="FunFam" id="3.90.770.10:FF:000001">
    <property type="entry name" value="3-hydroxy-3-methylglutaryl coenzyme A reductase"/>
    <property type="match status" value="1"/>
</dbReference>
<dbReference type="Gene3D" id="3.90.770.10">
    <property type="entry name" value="3-hydroxy-3-methylglutaryl-coenzyme A Reductase, Chain A, domain 2"/>
    <property type="match status" value="1"/>
</dbReference>
<dbReference type="Gene3D" id="1.10.3270.10">
    <property type="entry name" value="HMGR, N-terminal domain"/>
    <property type="match status" value="1"/>
</dbReference>
<dbReference type="Gene3D" id="3.30.70.420">
    <property type="entry name" value="Hydroxymethylglutaryl-CoA reductase, class I/II, NAD/NADP-binding domain"/>
    <property type="match status" value="1"/>
</dbReference>
<dbReference type="InterPro" id="IPR002202">
    <property type="entry name" value="HMG_CoA_Rdtase"/>
</dbReference>
<dbReference type="InterPro" id="IPR023074">
    <property type="entry name" value="HMG_CoA_Rdtase_cat_sf"/>
</dbReference>
<dbReference type="InterPro" id="IPR023076">
    <property type="entry name" value="HMG_CoA_Rdtase_CS"/>
</dbReference>
<dbReference type="InterPro" id="IPR004554">
    <property type="entry name" value="HMG_CoA_Rdtase_eu_arc"/>
</dbReference>
<dbReference type="InterPro" id="IPR023282">
    <property type="entry name" value="HMG_CoA_Rdtase_N"/>
</dbReference>
<dbReference type="InterPro" id="IPR009023">
    <property type="entry name" value="HMG_CoA_Rdtase_NAD(P)-bd_sf"/>
</dbReference>
<dbReference type="InterPro" id="IPR009029">
    <property type="entry name" value="HMG_CoA_Rdtase_sub-bd_dom_sf"/>
</dbReference>
<dbReference type="InterPro" id="IPR053958">
    <property type="entry name" value="HMGCR/SNAP/NPC1-like_SSD"/>
</dbReference>
<dbReference type="InterPro" id="IPR000731">
    <property type="entry name" value="SSD"/>
</dbReference>
<dbReference type="NCBIfam" id="TIGR00533">
    <property type="entry name" value="HMG_CoA_R_NADP"/>
    <property type="match status" value="1"/>
</dbReference>
<dbReference type="PANTHER" id="PTHR10572">
    <property type="entry name" value="3-HYDROXY-3-METHYLGLUTARYL-COENZYME A REDUCTASE"/>
    <property type="match status" value="1"/>
</dbReference>
<dbReference type="PANTHER" id="PTHR10572:SF24">
    <property type="entry name" value="3-HYDROXY-3-METHYLGLUTARYL-COENZYME A REDUCTASE"/>
    <property type="match status" value="1"/>
</dbReference>
<dbReference type="Pfam" id="PF00368">
    <property type="entry name" value="HMG-CoA_red"/>
    <property type="match status" value="1"/>
</dbReference>
<dbReference type="Pfam" id="PF12349">
    <property type="entry name" value="Sterol-sensing"/>
    <property type="match status" value="1"/>
</dbReference>
<dbReference type="PRINTS" id="PR00071">
    <property type="entry name" value="HMGCOARDTASE"/>
</dbReference>
<dbReference type="SUPFAM" id="SSF55035">
    <property type="entry name" value="NAD-binding domain of HMG-CoA reductase"/>
    <property type="match status" value="1"/>
</dbReference>
<dbReference type="SUPFAM" id="SSF56542">
    <property type="entry name" value="Substrate-binding domain of HMG-CoA reductase"/>
    <property type="match status" value="1"/>
</dbReference>
<dbReference type="PROSITE" id="PS00066">
    <property type="entry name" value="HMG_COA_REDUCTASE_1"/>
    <property type="match status" value="1"/>
</dbReference>
<dbReference type="PROSITE" id="PS00318">
    <property type="entry name" value="HMG_COA_REDUCTASE_2"/>
    <property type="match status" value="1"/>
</dbReference>
<dbReference type="PROSITE" id="PS01192">
    <property type="entry name" value="HMG_COA_REDUCTASE_3"/>
    <property type="match status" value="1"/>
</dbReference>
<dbReference type="PROSITE" id="PS50065">
    <property type="entry name" value="HMG_COA_REDUCTASE_4"/>
    <property type="match status" value="1"/>
</dbReference>
<dbReference type="PROSITE" id="PS50156">
    <property type="entry name" value="SSD"/>
    <property type="match status" value="1"/>
</dbReference>